<organism>
    <name type="scientific">Nitrosospira multiformis (strain ATCC 25196 / NCIMB 11849 / C 71)</name>
    <dbReference type="NCBI Taxonomy" id="323848"/>
    <lineage>
        <taxon>Bacteria</taxon>
        <taxon>Pseudomonadati</taxon>
        <taxon>Pseudomonadota</taxon>
        <taxon>Betaproteobacteria</taxon>
        <taxon>Nitrosomonadales</taxon>
        <taxon>Nitrosomonadaceae</taxon>
        <taxon>Nitrosospira</taxon>
    </lineage>
</organism>
<evidence type="ECO:0000255" key="1">
    <source>
        <dbReference type="HAMAP-Rule" id="MF_00385"/>
    </source>
</evidence>
<evidence type="ECO:0000305" key="2"/>
<protein>
    <recommendedName>
        <fullName evidence="1">Small ribosomal subunit protein bS16</fullName>
    </recommendedName>
    <alternativeName>
        <fullName evidence="2">30S ribosomal protein S16</fullName>
    </alternativeName>
</protein>
<proteinExistence type="inferred from homology"/>
<gene>
    <name evidence="1" type="primary">rpsP</name>
    <name type="ordered locus">Nmul_A0569</name>
</gene>
<sequence length="87" mass="9874">MVIIRLARGGAKKRPFFNMVVADSRNARDGKFIERVGFYNPRAAEGEESLRVKLDRVTYWQSKGAQPSDTVKKLIKQFDSRQEVAGS</sequence>
<feature type="chain" id="PRO_0000243837" description="Small ribosomal subunit protein bS16">
    <location>
        <begin position="1"/>
        <end position="87"/>
    </location>
</feature>
<accession>Q2YBJ4</accession>
<comment type="similarity">
    <text evidence="1">Belongs to the bacterial ribosomal protein bS16 family.</text>
</comment>
<keyword id="KW-1185">Reference proteome</keyword>
<keyword id="KW-0687">Ribonucleoprotein</keyword>
<keyword id="KW-0689">Ribosomal protein</keyword>
<reference key="1">
    <citation type="submission" date="2005-08" db="EMBL/GenBank/DDBJ databases">
        <title>Complete sequence of chromosome 1 of Nitrosospira multiformis ATCC 25196.</title>
        <authorList>
            <person name="Copeland A."/>
            <person name="Lucas S."/>
            <person name="Lapidus A."/>
            <person name="Barry K."/>
            <person name="Detter J.C."/>
            <person name="Glavina T."/>
            <person name="Hammon N."/>
            <person name="Israni S."/>
            <person name="Pitluck S."/>
            <person name="Chain P."/>
            <person name="Malfatti S."/>
            <person name="Shin M."/>
            <person name="Vergez L."/>
            <person name="Schmutz J."/>
            <person name="Larimer F."/>
            <person name="Land M."/>
            <person name="Hauser L."/>
            <person name="Kyrpides N."/>
            <person name="Lykidis A."/>
            <person name="Richardson P."/>
        </authorList>
    </citation>
    <scope>NUCLEOTIDE SEQUENCE [LARGE SCALE GENOMIC DNA]</scope>
    <source>
        <strain>ATCC 25196 / NCIMB 11849 / C 71</strain>
    </source>
</reference>
<name>RS16_NITMU</name>
<dbReference type="EMBL" id="CP000103">
    <property type="protein sequence ID" value="ABB73877.1"/>
    <property type="molecule type" value="Genomic_DNA"/>
</dbReference>
<dbReference type="RefSeq" id="WP_011379931.1">
    <property type="nucleotide sequence ID" value="NC_007614.1"/>
</dbReference>
<dbReference type="SMR" id="Q2YBJ4"/>
<dbReference type="STRING" id="323848.Nmul_A0569"/>
<dbReference type="KEGG" id="nmu:Nmul_A0569"/>
<dbReference type="eggNOG" id="COG0228">
    <property type="taxonomic scope" value="Bacteria"/>
</dbReference>
<dbReference type="HOGENOM" id="CLU_100590_5_1_4"/>
<dbReference type="OrthoDB" id="9807878at2"/>
<dbReference type="Proteomes" id="UP000002718">
    <property type="component" value="Chromosome"/>
</dbReference>
<dbReference type="GO" id="GO:0005737">
    <property type="term" value="C:cytoplasm"/>
    <property type="evidence" value="ECO:0007669"/>
    <property type="project" value="UniProtKB-ARBA"/>
</dbReference>
<dbReference type="GO" id="GO:0015935">
    <property type="term" value="C:small ribosomal subunit"/>
    <property type="evidence" value="ECO:0007669"/>
    <property type="project" value="TreeGrafter"/>
</dbReference>
<dbReference type="GO" id="GO:0003735">
    <property type="term" value="F:structural constituent of ribosome"/>
    <property type="evidence" value="ECO:0007669"/>
    <property type="project" value="InterPro"/>
</dbReference>
<dbReference type="GO" id="GO:0006412">
    <property type="term" value="P:translation"/>
    <property type="evidence" value="ECO:0007669"/>
    <property type="project" value="UniProtKB-UniRule"/>
</dbReference>
<dbReference type="Gene3D" id="3.30.1320.10">
    <property type="match status" value="1"/>
</dbReference>
<dbReference type="HAMAP" id="MF_00385">
    <property type="entry name" value="Ribosomal_bS16"/>
    <property type="match status" value="1"/>
</dbReference>
<dbReference type="InterPro" id="IPR000307">
    <property type="entry name" value="Ribosomal_bS16"/>
</dbReference>
<dbReference type="InterPro" id="IPR020592">
    <property type="entry name" value="Ribosomal_bS16_CS"/>
</dbReference>
<dbReference type="InterPro" id="IPR023803">
    <property type="entry name" value="Ribosomal_bS16_dom_sf"/>
</dbReference>
<dbReference type="NCBIfam" id="TIGR00002">
    <property type="entry name" value="S16"/>
    <property type="match status" value="1"/>
</dbReference>
<dbReference type="PANTHER" id="PTHR12919">
    <property type="entry name" value="30S RIBOSOMAL PROTEIN S16"/>
    <property type="match status" value="1"/>
</dbReference>
<dbReference type="PANTHER" id="PTHR12919:SF20">
    <property type="entry name" value="SMALL RIBOSOMAL SUBUNIT PROTEIN BS16M"/>
    <property type="match status" value="1"/>
</dbReference>
<dbReference type="Pfam" id="PF00886">
    <property type="entry name" value="Ribosomal_S16"/>
    <property type="match status" value="1"/>
</dbReference>
<dbReference type="SUPFAM" id="SSF54565">
    <property type="entry name" value="Ribosomal protein S16"/>
    <property type="match status" value="1"/>
</dbReference>
<dbReference type="PROSITE" id="PS00732">
    <property type="entry name" value="RIBOSOMAL_S16"/>
    <property type="match status" value="1"/>
</dbReference>